<comment type="function">
    <text evidence="1 8 13">Homoserine O-acetyltransferase; part of the gene cluster that mediates the biosynthesis of fusaric acid, a mycotoxin with low to moderate toxicity to animals and humans, but with high phytotoxic properties (PubMed:22652150, PubMed:25372119). L-aspartate is suggested as fusaric acid amino acid precursor that is activated and further processed to O-acetyl-L-homoserine by cluster enzymes aspartate kinase FUB3 and homoserine O-acetyltransferase FUB5, as well as enzymes of the primary metabolism (By similarity). The polyketide synthase (PKS) FUB1 generates the triketide trans-2-hexenal which is presumptively released by the hydrolase FUB4 and linked to the NRPS-bound amino acid precursor by NAD(P)-dependent dehydrogenase FUB6 (By similarity). FUB1, FUB4, and the non-canonical NRPS Fub8 may form an enzyme complex (By similarity). Further processing of the NRPS-bound intermediate might be carried out by FUB6 and the sulfhydrylase FUB7, enabling a spontaneous electrocyclization to close the carbon backbone of fusaric acid (By similarity). Dihydrofusaric acid is likely to be released via reduction by the thioester reductase (TR) domain of FUB8 whereupon the final oxidation to fusaric acid may (also) be performed by the FMN-dependent dehydrogenase FUB9 (By similarity).</text>
</comment>
<comment type="catalytic activity">
    <reaction evidence="16">
        <text>L-homoserine + acetyl-CoA = O-acetyl-L-homoserine + CoA</text>
        <dbReference type="Rhea" id="RHEA:13701"/>
        <dbReference type="ChEBI" id="CHEBI:57287"/>
        <dbReference type="ChEBI" id="CHEBI:57288"/>
        <dbReference type="ChEBI" id="CHEBI:57476"/>
        <dbReference type="ChEBI" id="CHEBI:57716"/>
        <dbReference type="EC" id="2.3.1.31"/>
    </reaction>
</comment>
<comment type="pathway">
    <text evidence="8 13">Mycotoxin biosynthesis.</text>
</comment>
<comment type="induction">
    <text evidence="9">Expression is positively regulated by the secondary metabolism regulator LAE1 (PubMed:22713715).</text>
</comment>
<comment type="biotechnology">
    <text evidence="4 5 6 7 10 11 12">Fusaric acid is phytotoxic to plants such as cotton and banana (PubMed:20955724, PubMed:23922960). It has been shown to induce programmed cell death in plants (PubMed:16868776, PubMed:23838885). In addition to a mild toxicity to animals, fusaric acid exhibits acanthamoebicidal, antioomycete, and antimycobacterial activities (PubMed:17927749, PubMed:21811925, PubMed:22864988).</text>
</comment>
<comment type="similarity">
    <text evidence="15">Belongs to the AB hydrolase superfamily. MetX family.</text>
</comment>
<accession>W7N293</accession>
<gene>
    <name evidence="14" type="primary">FUB5</name>
    <name type="ORF">FVEG_12519</name>
</gene>
<dbReference type="EC" id="2.3.1.31" evidence="16"/>
<dbReference type="EMBL" id="CM000580">
    <property type="protein sequence ID" value="EWG54260.1"/>
    <property type="molecule type" value="Genomic_DNA"/>
</dbReference>
<dbReference type="RefSeq" id="XP_018760451.1">
    <property type="nucleotide sequence ID" value="XM_018901859.1"/>
</dbReference>
<dbReference type="SMR" id="W7N293"/>
<dbReference type="STRING" id="334819.W7N293"/>
<dbReference type="ESTHER" id="gibf5-fub5">
    <property type="family name" value="Homoserine_transacetylase"/>
</dbReference>
<dbReference type="EnsemblFungi" id="FVEG_12519T0">
    <property type="protein sequence ID" value="FVEG_12519T0"/>
    <property type="gene ID" value="FVEG_12519"/>
</dbReference>
<dbReference type="GeneID" id="30069953"/>
<dbReference type="KEGG" id="fvr:FVEG_12519"/>
<dbReference type="VEuPathDB" id="FungiDB:FVEG_12519"/>
<dbReference type="eggNOG" id="ENOG502QRIX">
    <property type="taxonomic scope" value="Eukaryota"/>
</dbReference>
<dbReference type="HOGENOM" id="CLU_028760_5_0_1"/>
<dbReference type="OMA" id="GWYGADF"/>
<dbReference type="OrthoDB" id="96426at110618"/>
<dbReference type="PHI-base" id="PHI:3391"/>
<dbReference type="Proteomes" id="UP000009096">
    <property type="component" value="Chromosome 3"/>
</dbReference>
<dbReference type="GO" id="GO:0004414">
    <property type="term" value="F:homoserine O-acetyltransferase activity"/>
    <property type="evidence" value="ECO:0007669"/>
    <property type="project" value="UniProtKB-EC"/>
</dbReference>
<dbReference type="GO" id="GO:0009092">
    <property type="term" value="P:homoserine metabolic process"/>
    <property type="evidence" value="ECO:0007669"/>
    <property type="project" value="TreeGrafter"/>
</dbReference>
<dbReference type="GO" id="GO:0009086">
    <property type="term" value="P:methionine biosynthetic process"/>
    <property type="evidence" value="ECO:0007669"/>
    <property type="project" value="TreeGrafter"/>
</dbReference>
<dbReference type="Gene3D" id="3.40.50.1820">
    <property type="entry name" value="alpha/beta hydrolase"/>
    <property type="match status" value="1"/>
</dbReference>
<dbReference type="HAMAP" id="MF_00296">
    <property type="entry name" value="MetX_acyltransf"/>
    <property type="match status" value="1"/>
</dbReference>
<dbReference type="InterPro" id="IPR000073">
    <property type="entry name" value="AB_hydrolase_1"/>
</dbReference>
<dbReference type="InterPro" id="IPR029058">
    <property type="entry name" value="AB_hydrolase_fold"/>
</dbReference>
<dbReference type="InterPro" id="IPR008220">
    <property type="entry name" value="HAT_MetX-like"/>
</dbReference>
<dbReference type="NCBIfam" id="TIGR01392">
    <property type="entry name" value="homoserO_Ac_trn"/>
    <property type="match status" value="1"/>
</dbReference>
<dbReference type="NCBIfam" id="NF001209">
    <property type="entry name" value="PRK00175.1"/>
    <property type="match status" value="1"/>
</dbReference>
<dbReference type="PANTHER" id="PTHR32268">
    <property type="entry name" value="HOMOSERINE O-ACETYLTRANSFERASE"/>
    <property type="match status" value="1"/>
</dbReference>
<dbReference type="PANTHER" id="PTHR32268:SF11">
    <property type="entry name" value="HOMOSERINE O-ACETYLTRANSFERASE"/>
    <property type="match status" value="1"/>
</dbReference>
<dbReference type="Pfam" id="PF00561">
    <property type="entry name" value="Abhydrolase_1"/>
    <property type="match status" value="1"/>
</dbReference>
<dbReference type="PIRSF" id="PIRSF000443">
    <property type="entry name" value="Homoser_Ac_trans"/>
    <property type="match status" value="1"/>
</dbReference>
<dbReference type="SUPFAM" id="SSF53474">
    <property type="entry name" value="alpha/beta-Hydrolases"/>
    <property type="match status" value="1"/>
</dbReference>
<keyword id="KW-1185">Reference proteome</keyword>
<keyword id="KW-0808">Transferase</keyword>
<evidence type="ECO:0000250" key="1">
    <source>
        <dbReference type="UniProtKB" id="S0DUX2"/>
    </source>
</evidence>
<evidence type="ECO:0000255" key="2"/>
<evidence type="ECO:0000256" key="3">
    <source>
        <dbReference type="SAM" id="MobiDB-lite"/>
    </source>
</evidence>
<evidence type="ECO:0000269" key="4">
    <source>
    </source>
</evidence>
<evidence type="ECO:0000269" key="5">
    <source>
    </source>
</evidence>
<evidence type="ECO:0000269" key="6">
    <source>
    </source>
</evidence>
<evidence type="ECO:0000269" key="7">
    <source>
    </source>
</evidence>
<evidence type="ECO:0000269" key="8">
    <source>
    </source>
</evidence>
<evidence type="ECO:0000269" key="9">
    <source>
    </source>
</evidence>
<evidence type="ECO:0000269" key="10">
    <source>
    </source>
</evidence>
<evidence type="ECO:0000269" key="11">
    <source>
    </source>
</evidence>
<evidence type="ECO:0000269" key="12">
    <source>
    </source>
</evidence>
<evidence type="ECO:0000269" key="13">
    <source>
    </source>
</evidence>
<evidence type="ECO:0000303" key="14">
    <source>
    </source>
</evidence>
<evidence type="ECO:0000305" key="15"/>
<evidence type="ECO:0000305" key="16">
    <source>
    </source>
</evidence>
<reference key="1">
    <citation type="journal article" date="2010" name="Nature">
        <title>Comparative genomics reveals mobile pathogenicity chromosomes in Fusarium.</title>
        <authorList>
            <person name="Ma L.-J."/>
            <person name="van der Does H.C."/>
            <person name="Borkovich K.A."/>
            <person name="Coleman J.J."/>
            <person name="Daboussi M.-J."/>
            <person name="Di Pietro A."/>
            <person name="Dufresne M."/>
            <person name="Freitag M."/>
            <person name="Grabherr M."/>
            <person name="Henrissat B."/>
            <person name="Houterman P.M."/>
            <person name="Kang S."/>
            <person name="Shim W.-B."/>
            <person name="Woloshuk C."/>
            <person name="Xie X."/>
            <person name="Xu J.-R."/>
            <person name="Antoniw J."/>
            <person name="Baker S.E."/>
            <person name="Bluhm B.H."/>
            <person name="Breakspear A."/>
            <person name="Brown D.W."/>
            <person name="Butchko R.A.E."/>
            <person name="Chapman S."/>
            <person name="Coulson R."/>
            <person name="Coutinho P.M."/>
            <person name="Danchin E.G.J."/>
            <person name="Diener A."/>
            <person name="Gale L.R."/>
            <person name="Gardiner D.M."/>
            <person name="Goff S."/>
            <person name="Hammond-Kosack K.E."/>
            <person name="Hilburn K."/>
            <person name="Hua-Van A."/>
            <person name="Jonkers W."/>
            <person name="Kazan K."/>
            <person name="Kodira C.D."/>
            <person name="Koehrsen M."/>
            <person name="Kumar L."/>
            <person name="Lee Y.-H."/>
            <person name="Li L."/>
            <person name="Manners J.M."/>
            <person name="Miranda-Saavedra D."/>
            <person name="Mukherjee M."/>
            <person name="Park G."/>
            <person name="Park J."/>
            <person name="Park S.-Y."/>
            <person name="Proctor R.H."/>
            <person name="Regev A."/>
            <person name="Ruiz-Roldan M.C."/>
            <person name="Sain D."/>
            <person name="Sakthikumar S."/>
            <person name="Sykes S."/>
            <person name="Schwartz D.C."/>
            <person name="Turgeon B.G."/>
            <person name="Wapinski I."/>
            <person name="Yoder O."/>
            <person name="Young S."/>
            <person name="Zeng Q."/>
            <person name="Zhou S."/>
            <person name="Galagan J."/>
            <person name="Cuomo C.A."/>
            <person name="Kistler H.C."/>
            <person name="Rep M."/>
        </authorList>
    </citation>
    <scope>NUCLEOTIDE SEQUENCE [LARGE SCALE GENOMIC DNA]</scope>
    <source>
        <strain>M3125 / FGSC 7600</strain>
    </source>
</reference>
<reference key="2">
    <citation type="journal article" date="2006" name="Planta">
        <title>Fusaric acid induces apoptosis in saffron root-tip cells: roles of caspase-like activity, cytochrome c, and H2O2.</title>
        <authorList>
            <person name="Samadi L."/>
            <person name="Shahsavan Behboodi B."/>
        </authorList>
    </citation>
    <scope>BIOTECHNOLOGY</scope>
</reference>
<reference key="3">
    <citation type="journal article" date="2008" name="J. Appl. Microbiol.">
        <title>Bikaverin and fusaric acid from Fusarium oxysporum show antioomycete activity against Phytophthora infestans.</title>
        <authorList>
            <person name="Son S.W."/>
            <person name="Kim H.Y."/>
            <person name="Choi G.J."/>
            <person name="Lim H.K."/>
            <person name="Jang K.S."/>
            <person name="Lee S.O."/>
            <person name="Lee S."/>
            <person name="Sung N.D."/>
            <person name="Kim J.C."/>
        </authorList>
    </citation>
    <scope>BIOTECHNOLOGY</scope>
</reference>
<reference key="4">
    <citation type="journal article" date="2011" name="Arch. Pharm. Res.">
        <title>Antimycobacterial activity of fusaric acid from a mangrove endophyte and its metal complexes.</title>
        <authorList>
            <person name="Pan J.H."/>
            <person name="Chen Y."/>
            <person name="Huang Y.H."/>
            <person name="Tao Y.W."/>
            <person name="Wang J."/>
            <person name="Li Y."/>
            <person name="Peng Y."/>
            <person name="Dong T."/>
            <person name="Lai X.M."/>
            <person name="Lin Y.C."/>
        </authorList>
    </citation>
    <scope>BIOTECHNOLOGY</scope>
</reference>
<reference key="5">
    <citation type="journal article" date="2011" name="Toxicon">
        <title>Phytotoxicity of fusaric acid and analogs to cotton.</title>
        <authorList>
            <person name="Stipanovic R.D."/>
            <person name="Puckhaber L.S."/>
            <person name="Liu J."/>
            <person name="Bell A.A."/>
        </authorList>
    </citation>
    <scope>BIOTECHNOLOGY</scope>
</reference>
<reference key="6">
    <citation type="journal article" date="2012" name="Fungal Genet. Biol.">
        <title>Identification of gene clusters associated with fusaric acid, fusarin, and perithecial pigment production in Fusarium verticillioides.</title>
        <authorList>
            <person name="Brown D.W."/>
            <person name="Butchko R.A."/>
            <person name="Busman M."/>
            <person name="Proctor R.H."/>
        </authorList>
    </citation>
    <scope>FUNCTION</scope>
</reference>
<reference key="7">
    <citation type="journal article" date="2012" name="Fungal Genet. Biol.">
        <title>Lae1 regulates expression of multiple secondary metabolite gene clusters in Fusarium verticillioides.</title>
        <authorList>
            <person name="Butchko R.A."/>
            <person name="Brown D.W."/>
            <person name="Busman M."/>
            <person name="Tudzynski B."/>
            <person name="Wiemann P."/>
        </authorList>
    </citation>
    <scope>INDUCTION</scope>
</reference>
<reference key="8">
    <citation type="journal article" date="2012" name="Planta Med.">
        <title>In vitro acanthamoebicidal activity of fusaric acid and dehydrofusaric acid from an endophytic fungus Fusarium sp. Tlau3.</title>
        <authorList>
            <person name="Boonman N."/>
            <person name="Prachya S."/>
            <person name="Boonmee A."/>
            <person name="Kittakoop P."/>
            <person name="Wiyakrutta S."/>
            <person name="Sriubolmas N."/>
            <person name="Warit S."/>
            <person name="Dharmkrong-At Chusattayanond A."/>
        </authorList>
    </citation>
    <scope>BIOTECHNOLOGY</scope>
</reference>
<reference key="9">
    <citation type="journal article" date="2013" name="Planta">
        <title>Fusaric acid induction of programmed cell death modulated through nitric oxide signalling in tobacco suspension cells.</title>
        <authorList>
            <person name="Jiao J."/>
            <person name="Zhou B."/>
            <person name="Zhu X."/>
            <person name="Gao Z."/>
            <person name="Liang Y."/>
        </authorList>
    </citation>
    <scope>BIOTECHNOLOGY</scope>
</reference>
<reference key="10">
    <citation type="journal article" date="2013" name="PLoS ONE">
        <title>Contamination of bananas with beauvericin and fusaric acid produced by Fusarium oxysporum f. sp. cubense.</title>
        <authorList>
            <person name="Li C."/>
            <person name="Zuo C."/>
            <person name="Deng G."/>
            <person name="Kuang R."/>
            <person name="Yang Q."/>
            <person name="Hu C."/>
            <person name="Sheng O."/>
            <person name="Zhang S."/>
            <person name="Ma L."/>
            <person name="Wei Y."/>
            <person name="Yang J."/>
            <person name="Liu S."/>
            <person name="Biswas M.K."/>
            <person name="Viljoen A."/>
            <person name="Yi G."/>
        </authorList>
    </citation>
    <scope>BIOTECHNOLOGY</scope>
</reference>
<reference key="11">
    <citation type="journal article" date="2015" name="Mol. Plant Microbe Interact.">
        <title>Identification of a 12-gene fusaric acid biosynthetic gene cluster in Fusarium species through comparative and functional genomics.</title>
        <authorList>
            <person name="Brown D.W."/>
            <person name="Lee S.H."/>
            <person name="Kim L.H."/>
            <person name="Ryu J.G."/>
            <person name="Lee S."/>
            <person name="Seo Y."/>
            <person name="Kim Y.H."/>
            <person name="Busman M."/>
            <person name="Yun S.H."/>
            <person name="Proctor R.H."/>
            <person name="Lee T."/>
        </authorList>
    </citation>
    <scope>FUNCTION</scope>
</reference>
<protein>
    <recommendedName>
        <fullName evidence="14">Homoserine O-acetyltransferase FUB5</fullName>
        <ecNumber evidence="16">2.3.1.31</ecNumber>
    </recommendedName>
    <alternativeName>
        <fullName evidence="14">Fusaric acid biosynthesis protein 5</fullName>
    </alternativeName>
</protein>
<organism>
    <name type="scientific">Gibberella moniliformis (strain M3125 / FGSC 7600)</name>
    <name type="common">Maize ear and stalk rot fungus</name>
    <name type="synonym">Fusarium verticillioides</name>
    <dbReference type="NCBI Taxonomy" id="334819"/>
    <lineage>
        <taxon>Eukaryota</taxon>
        <taxon>Fungi</taxon>
        <taxon>Dikarya</taxon>
        <taxon>Ascomycota</taxon>
        <taxon>Pezizomycotina</taxon>
        <taxon>Sordariomycetes</taxon>
        <taxon>Hypocreomycetidae</taxon>
        <taxon>Hypocreales</taxon>
        <taxon>Nectriaceae</taxon>
        <taxon>Fusarium</taxon>
        <taxon>Fusarium fujikuroi species complex</taxon>
    </lineage>
</organism>
<feature type="chain" id="PRO_0000437319" description="Homoserine O-acetyltransferase FUB5">
    <location>
        <begin position="1"/>
        <end position="463"/>
    </location>
</feature>
<feature type="domain" description="AB hydrolase-1" evidence="2">
    <location>
        <begin position="113"/>
        <end position="436"/>
    </location>
</feature>
<feature type="region of interest" description="Disordered" evidence="3">
    <location>
        <begin position="296"/>
        <end position="331"/>
    </location>
</feature>
<feature type="compositionally biased region" description="Basic and acidic residues" evidence="3">
    <location>
        <begin position="296"/>
        <end position="312"/>
    </location>
</feature>
<feature type="active site" description="Nucleophile" evidence="2">
    <location>
        <position position="211"/>
    </location>
</feature>
<feature type="active site" evidence="2">
    <location>
        <position position="403"/>
    </location>
</feature>
<feature type="active site" evidence="2">
    <location>
        <position position="432"/>
    </location>
</feature>
<proteinExistence type="evidence at protein level"/>
<sequence>MSRRQTLKTLQKLILAPSQHISLSIASNLSVIPSRSMTTTATVPVLPTSIHDGLGKGIAYEKSLPRPVNPFSHRVPGREIITIPKFTLESGVEMRNVPVAYMSWGKLSSKANNVMIICHALSGSADVSDWWGPLLGHGKAFDTDKFFVICMNSLGSPYGTASPVTAKNGDYSEGWYGADFPSTTIRDDVRLHKLALDKLGVRKVAAAIGGSMGGMHVLEWAFFGKDYVRCIVPAATSSHQSAWAIGWGEAQRHAIRSDVKYKNGRYGFDDPPVLGLEAARMTALLTYRSRDSLERRFGRDTGSKKKTQKQESKTLPSNSTPIHSHSGADETPVAFDRADSSFAAQSYLRYQAKKFSNRFDSNCYIALTNKLDTHDLARGRTRTITEALSLIEQPTLVLGIRSDGLYTLAEQEQIARAVPNAKLREIVSDDGHDAFLIEWSQLNWLLIGFLHESLPDIMQRAAL</sequence>
<name>FUB5_GIBM7</name>